<keyword id="KW-0413">Isomerase</keyword>
<keyword id="KW-1185">Reference proteome</keyword>
<dbReference type="EC" id="5.3.1.6" evidence="1"/>
<dbReference type="EMBL" id="CT971583">
    <property type="protein sequence ID" value="CAK24492.1"/>
    <property type="molecule type" value="Genomic_DNA"/>
</dbReference>
<dbReference type="SMR" id="A5GNH7"/>
<dbReference type="STRING" id="32051.SynWH7803_2066"/>
<dbReference type="KEGG" id="syx:SynWH7803_2066"/>
<dbReference type="eggNOG" id="COG0120">
    <property type="taxonomic scope" value="Bacteria"/>
</dbReference>
<dbReference type="HOGENOM" id="CLU_056590_1_1_3"/>
<dbReference type="OrthoDB" id="5870696at2"/>
<dbReference type="UniPathway" id="UPA00115">
    <property type="reaction ID" value="UER00412"/>
</dbReference>
<dbReference type="Proteomes" id="UP000001566">
    <property type="component" value="Chromosome"/>
</dbReference>
<dbReference type="GO" id="GO:0005829">
    <property type="term" value="C:cytosol"/>
    <property type="evidence" value="ECO:0007669"/>
    <property type="project" value="TreeGrafter"/>
</dbReference>
<dbReference type="GO" id="GO:0004751">
    <property type="term" value="F:ribose-5-phosphate isomerase activity"/>
    <property type="evidence" value="ECO:0007669"/>
    <property type="project" value="UniProtKB-UniRule"/>
</dbReference>
<dbReference type="GO" id="GO:0006014">
    <property type="term" value="P:D-ribose metabolic process"/>
    <property type="evidence" value="ECO:0007669"/>
    <property type="project" value="TreeGrafter"/>
</dbReference>
<dbReference type="GO" id="GO:0009052">
    <property type="term" value="P:pentose-phosphate shunt, non-oxidative branch"/>
    <property type="evidence" value="ECO:0007669"/>
    <property type="project" value="UniProtKB-UniRule"/>
</dbReference>
<dbReference type="CDD" id="cd01398">
    <property type="entry name" value="RPI_A"/>
    <property type="match status" value="1"/>
</dbReference>
<dbReference type="FunFam" id="3.30.70.260:FF:000018">
    <property type="entry name" value="Ribose-5-phosphate isomerase A"/>
    <property type="match status" value="1"/>
</dbReference>
<dbReference type="FunFam" id="3.40.50.1360:FF:000001">
    <property type="entry name" value="Ribose-5-phosphate isomerase A"/>
    <property type="match status" value="1"/>
</dbReference>
<dbReference type="Gene3D" id="3.30.70.260">
    <property type="match status" value="1"/>
</dbReference>
<dbReference type="Gene3D" id="3.40.50.1360">
    <property type="match status" value="1"/>
</dbReference>
<dbReference type="HAMAP" id="MF_00170">
    <property type="entry name" value="Rib_5P_isom_A"/>
    <property type="match status" value="1"/>
</dbReference>
<dbReference type="InterPro" id="IPR037171">
    <property type="entry name" value="NagB/RpiA_transferase-like"/>
</dbReference>
<dbReference type="InterPro" id="IPR020672">
    <property type="entry name" value="Ribose5P_isomerase_typA_subgr"/>
</dbReference>
<dbReference type="InterPro" id="IPR004788">
    <property type="entry name" value="Ribose5P_isomerase_type_A"/>
</dbReference>
<dbReference type="NCBIfam" id="NF001924">
    <property type="entry name" value="PRK00702.1"/>
    <property type="match status" value="1"/>
</dbReference>
<dbReference type="NCBIfam" id="TIGR00021">
    <property type="entry name" value="rpiA"/>
    <property type="match status" value="1"/>
</dbReference>
<dbReference type="PANTHER" id="PTHR11934">
    <property type="entry name" value="RIBOSE-5-PHOSPHATE ISOMERASE"/>
    <property type="match status" value="1"/>
</dbReference>
<dbReference type="PANTHER" id="PTHR11934:SF0">
    <property type="entry name" value="RIBOSE-5-PHOSPHATE ISOMERASE"/>
    <property type="match status" value="1"/>
</dbReference>
<dbReference type="Pfam" id="PF06026">
    <property type="entry name" value="Rib_5-P_isom_A"/>
    <property type="match status" value="1"/>
</dbReference>
<dbReference type="SUPFAM" id="SSF75445">
    <property type="entry name" value="D-ribose-5-phosphate isomerase (RpiA), lid domain"/>
    <property type="match status" value="1"/>
</dbReference>
<dbReference type="SUPFAM" id="SSF100950">
    <property type="entry name" value="NagB/RpiA/CoA transferase-like"/>
    <property type="match status" value="1"/>
</dbReference>
<comment type="function">
    <text evidence="1">Catalyzes the reversible conversion of ribose-5-phosphate to ribulose 5-phosphate.</text>
</comment>
<comment type="catalytic activity">
    <reaction evidence="1">
        <text>aldehydo-D-ribose 5-phosphate = D-ribulose 5-phosphate</text>
        <dbReference type="Rhea" id="RHEA:14657"/>
        <dbReference type="ChEBI" id="CHEBI:58121"/>
        <dbReference type="ChEBI" id="CHEBI:58273"/>
        <dbReference type="EC" id="5.3.1.6"/>
    </reaction>
</comment>
<comment type="pathway">
    <text evidence="1">Carbohydrate degradation; pentose phosphate pathway; D-ribose 5-phosphate from D-ribulose 5-phosphate (non-oxidative stage): step 1/1.</text>
</comment>
<comment type="subunit">
    <text evidence="1">Homodimer.</text>
</comment>
<comment type="similarity">
    <text evidence="1">Belongs to the ribose 5-phosphate isomerase family.</text>
</comment>
<gene>
    <name evidence="1" type="primary">rpiA</name>
    <name type="ordered locus">SynWH7803_2066</name>
</gene>
<protein>
    <recommendedName>
        <fullName evidence="1">Ribose-5-phosphate isomerase A</fullName>
        <ecNumber evidence="1">5.3.1.6</ecNumber>
    </recommendedName>
    <alternativeName>
        <fullName evidence="1">Phosphoriboisomerase A</fullName>
        <shortName evidence="1">PRI</shortName>
    </alternativeName>
</protein>
<proteinExistence type="inferred from homology"/>
<accession>A5GNH7</accession>
<feature type="chain" id="PRO_1000017018" description="Ribose-5-phosphate isomerase A">
    <location>
        <begin position="1"/>
        <end position="238"/>
    </location>
</feature>
<feature type="active site" description="Proton acceptor" evidence="1">
    <location>
        <position position="109"/>
    </location>
</feature>
<feature type="binding site" evidence="1">
    <location>
        <begin position="30"/>
        <end position="33"/>
    </location>
    <ligand>
        <name>substrate</name>
    </ligand>
</feature>
<feature type="binding site" evidence="1">
    <location>
        <begin position="87"/>
        <end position="90"/>
    </location>
    <ligand>
        <name>substrate</name>
    </ligand>
</feature>
<feature type="binding site" evidence="1">
    <location>
        <begin position="100"/>
        <end position="103"/>
    </location>
    <ligand>
        <name>substrate</name>
    </ligand>
</feature>
<feature type="binding site" evidence="1">
    <location>
        <position position="127"/>
    </location>
    <ligand>
        <name>substrate</name>
    </ligand>
</feature>
<reference key="1">
    <citation type="submission" date="2006-05" db="EMBL/GenBank/DDBJ databases">
        <authorList>
            <consortium name="Genoscope"/>
        </authorList>
    </citation>
    <scope>NUCLEOTIDE SEQUENCE [LARGE SCALE GENOMIC DNA]</scope>
    <source>
        <strain>WH7803</strain>
    </source>
</reference>
<organism>
    <name type="scientific">Synechococcus sp. (strain WH7803)</name>
    <dbReference type="NCBI Taxonomy" id="32051"/>
    <lineage>
        <taxon>Bacteria</taxon>
        <taxon>Bacillati</taxon>
        <taxon>Cyanobacteriota</taxon>
        <taxon>Cyanophyceae</taxon>
        <taxon>Synechococcales</taxon>
        <taxon>Synechococcaceae</taxon>
        <taxon>Synechococcus</taxon>
    </lineage>
</organism>
<name>RPIA_SYNPW</name>
<sequence length="238" mass="24823">MSDLQNQMKQAVADAAVQQFRDGMVVGLGSGSTAALMIKGLGERLAAGQLSDIVGVTTSFQGEVLAAELGIPLRSLNAVDRIDLAIDGADEVDPAFQLIKGGGACHVQEKLVAARADRFIVVVDSTKLVERLNLGFLLPVEVLPGAWVQISQQLKAMGGDAELRMATRKAGPVVTDQGNLVLDVRFEGGIADPASLEKEINNIPGVLENGLFVNLADEVLVGQIDGGVASARSLEKAG</sequence>
<evidence type="ECO:0000255" key="1">
    <source>
        <dbReference type="HAMAP-Rule" id="MF_00170"/>
    </source>
</evidence>